<evidence type="ECO:0000255" key="1">
    <source>
        <dbReference type="HAMAP-Rule" id="MF_00502"/>
    </source>
</evidence>
<evidence type="ECO:0000305" key="2"/>
<dbReference type="EMBL" id="AE016795">
    <property type="protein sequence ID" value="AAO10246.1"/>
    <property type="molecule type" value="Genomic_DNA"/>
</dbReference>
<dbReference type="RefSeq" id="WP_011079746.1">
    <property type="nucleotide sequence ID" value="NC_004459.3"/>
</dbReference>
<dbReference type="SMR" id="Q8DBH7"/>
<dbReference type="KEGG" id="vvu:VV1_1840"/>
<dbReference type="HOGENOM" id="CLU_114306_2_2_6"/>
<dbReference type="Proteomes" id="UP000002275">
    <property type="component" value="Chromosome 1"/>
</dbReference>
<dbReference type="GO" id="GO:1990904">
    <property type="term" value="C:ribonucleoprotein complex"/>
    <property type="evidence" value="ECO:0007669"/>
    <property type="project" value="UniProtKB-KW"/>
</dbReference>
<dbReference type="GO" id="GO:0005840">
    <property type="term" value="C:ribosome"/>
    <property type="evidence" value="ECO:0007669"/>
    <property type="project" value="UniProtKB-KW"/>
</dbReference>
<dbReference type="GO" id="GO:0003735">
    <property type="term" value="F:structural constituent of ribosome"/>
    <property type="evidence" value="ECO:0007669"/>
    <property type="project" value="InterPro"/>
</dbReference>
<dbReference type="GO" id="GO:0006412">
    <property type="term" value="P:translation"/>
    <property type="evidence" value="ECO:0007669"/>
    <property type="project" value="UniProtKB-UniRule"/>
</dbReference>
<dbReference type="Gene3D" id="4.10.830.30">
    <property type="entry name" value="Ribosomal protein L31"/>
    <property type="match status" value="1"/>
</dbReference>
<dbReference type="HAMAP" id="MF_00502">
    <property type="entry name" value="Ribosomal_bL31_2"/>
    <property type="match status" value="1"/>
</dbReference>
<dbReference type="InterPro" id="IPR034704">
    <property type="entry name" value="Ribosomal_bL28/bL31-like_sf"/>
</dbReference>
<dbReference type="InterPro" id="IPR002150">
    <property type="entry name" value="Ribosomal_bL31"/>
</dbReference>
<dbReference type="InterPro" id="IPR027493">
    <property type="entry name" value="Ribosomal_bL31_B"/>
</dbReference>
<dbReference type="InterPro" id="IPR042105">
    <property type="entry name" value="Ribosomal_bL31_sf"/>
</dbReference>
<dbReference type="NCBIfam" id="TIGR00105">
    <property type="entry name" value="L31"/>
    <property type="match status" value="1"/>
</dbReference>
<dbReference type="NCBIfam" id="NF002462">
    <property type="entry name" value="PRK01678.1"/>
    <property type="match status" value="1"/>
</dbReference>
<dbReference type="PANTHER" id="PTHR33280">
    <property type="entry name" value="50S RIBOSOMAL PROTEIN L31, CHLOROPLASTIC"/>
    <property type="match status" value="1"/>
</dbReference>
<dbReference type="PANTHER" id="PTHR33280:SF1">
    <property type="entry name" value="LARGE RIBOSOMAL SUBUNIT PROTEIN BL31C"/>
    <property type="match status" value="1"/>
</dbReference>
<dbReference type="Pfam" id="PF01197">
    <property type="entry name" value="Ribosomal_L31"/>
    <property type="match status" value="1"/>
</dbReference>
<dbReference type="PRINTS" id="PR01249">
    <property type="entry name" value="RIBOSOMALL31"/>
</dbReference>
<dbReference type="SUPFAM" id="SSF143800">
    <property type="entry name" value="L28p-like"/>
    <property type="match status" value="1"/>
</dbReference>
<dbReference type="PROSITE" id="PS01143">
    <property type="entry name" value="RIBOSOMAL_L31"/>
    <property type="match status" value="1"/>
</dbReference>
<reference key="1">
    <citation type="submission" date="2002-12" db="EMBL/GenBank/DDBJ databases">
        <title>Complete genome sequence of Vibrio vulnificus CMCP6.</title>
        <authorList>
            <person name="Rhee J.H."/>
            <person name="Kim S.Y."/>
            <person name="Chung S.S."/>
            <person name="Kim J.J."/>
            <person name="Moon Y.H."/>
            <person name="Jeong H."/>
            <person name="Choy H.E."/>
        </authorList>
    </citation>
    <scope>NUCLEOTIDE SEQUENCE [LARGE SCALE GENOMIC DNA]</scope>
    <source>
        <strain>CMCP6</strain>
    </source>
</reference>
<keyword id="KW-0687">Ribonucleoprotein</keyword>
<keyword id="KW-0689">Ribosomal protein</keyword>
<feature type="chain" id="PRO_0000173282" description="Large ribosomal subunit protein bL31B">
    <location>
        <begin position="1"/>
        <end position="86"/>
    </location>
</feature>
<accession>Q8DBH7</accession>
<protein>
    <recommendedName>
        <fullName evidence="1">Large ribosomal subunit protein bL31B</fullName>
    </recommendedName>
    <alternativeName>
        <fullName evidence="2">50S ribosomal protein L31 type B</fullName>
    </alternativeName>
</protein>
<gene>
    <name evidence="1" type="primary">rpmE2</name>
    <name type="ordered locus">VV1_1840</name>
</gene>
<organism>
    <name type="scientific">Vibrio vulnificus (strain CMCP6)</name>
    <dbReference type="NCBI Taxonomy" id="216895"/>
    <lineage>
        <taxon>Bacteria</taxon>
        <taxon>Pseudomonadati</taxon>
        <taxon>Pseudomonadota</taxon>
        <taxon>Gammaproteobacteria</taxon>
        <taxon>Vibrionales</taxon>
        <taxon>Vibrionaceae</taxon>
        <taxon>Vibrio</taxon>
    </lineage>
</organism>
<proteinExistence type="inferred from homology"/>
<name>RL31B_VIBVU</name>
<sequence>MKPGIHPEYRKVVFHDTSVDHYFVVGSTLQTDRTIEWEDGQTYPYFTIEVSSESHPFYTGKQRVVQKEGRVANFNRRFAQFGSREG</sequence>
<comment type="subunit">
    <text evidence="1">Part of the 50S ribosomal subunit.</text>
</comment>
<comment type="similarity">
    <text evidence="1">Belongs to the bacterial ribosomal protein bL31 family. Type B subfamily.</text>
</comment>